<organism>
    <name type="scientific">Streptococcus pneumoniae (strain Hungary19A-6)</name>
    <dbReference type="NCBI Taxonomy" id="487214"/>
    <lineage>
        <taxon>Bacteria</taxon>
        <taxon>Bacillati</taxon>
        <taxon>Bacillota</taxon>
        <taxon>Bacilli</taxon>
        <taxon>Lactobacillales</taxon>
        <taxon>Streptococcaceae</taxon>
        <taxon>Streptococcus</taxon>
    </lineage>
</organism>
<name>Y1504_STRPI</name>
<proteinExistence type="inferred from homology"/>
<accession>B1ICH3</accession>
<feature type="chain" id="PRO_1000198530" description="UPF0342 protein SPH_1504">
    <location>
        <begin position="1"/>
        <end position="112"/>
    </location>
</feature>
<comment type="similarity">
    <text evidence="1">Belongs to the UPF0342 family.</text>
</comment>
<dbReference type="EMBL" id="CP000936">
    <property type="protein sequence ID" value="ACA37070.1"/>
    <property type="molecule type" value="Genomic_DNA"/>
</dbReference>
<dbReference type="RefSeq" id="WP_000065990.1">
    <property type="nucleotide sequence ID" value="NC_010380.1"/>
</dbReference>
<dbReference type="SMR" id="B1ICH3"/>
<dbReference type="KEGG" id="spv:SPH_1504"/>
<dbReference type="HOGENOM" id="CLU_140243_2_0_9"/>
<dbReference type="Proteomes" id="UP000002163">
    <property type="component" value="Chromosome"/>
</dbReference>
<dbReference type="Gene3D" id="1.20.1500.10">
    <property type="entry name" value="YheA/YmcA-like"/>
    <property type="match status" value="1"/>
</dbReference>
<dbReference type="HAMAP" id="MF_01526">
    <property type="entry name" value="UPF0342"/>
    <property type="match status" value="1"/>
</dbReference>
<dbReference type="InterPro" id="IPR010368">
    <property type="entry name" value="Com_YlbF"/>
</dbReference>
<dbReference type="InterPro" id="IPR023378">
    <property type="entry name" value="YheA/YmcA-like_dom_sf"/>
</dbReference>
<dbReference type="NCBIfam" id="NF010209">
    <property type="entry name" value="PRK13676.1-1"/>
    <property type="match status" value="1"/>
</dbReference>
<dbReference type="Pfam" id="PF06133">
    <property type="entry name" value="Com_YlbF"/>
    <property type="match status" value="1"/>
</dbReference>
<dbReference type="SUPFAM" id="SSF158622">
    <property type="entry name" value="YheA/YmcA-like"/>
    <property type="match status" value="1"/>
</dbReference>
<protein>
    <recommendedName>
        <fullName evidence="1">UPF0342 protein SPH_1504</fullName>
    </recommendedName>
</protein>
<reference key="1">
    <citation type="journal article" date="2010" name="Genome Biol.">
        <title>Structure and dynamics of the pan-genome of Streptococcus pneumoniae and closely related species.</title>
        <authorList>
            <person name="Donati C."/>
            <person name="Hiller N.L."/>
            <person name="Tettelin H."/>
            <person name="Muzzi A."/>
            <person name="Croucher N.J."/>
            <person name="Angiuoli S.V."/>
            <person name="Oggioni M."/>
            <person name="Dunning Hotopp J.C."/>
            <person name="Hu F.Z."/>
            <person name="Riley D.R."/>
            <person name="Covacci A."/>
            <person name="Mitchell T.J."/>
            <person name="Bentley S.D."/>
            <person name="Kilian M."/>
            <person name="Ehrlich G.D."/>
            <person name="Rappuoli R."/>
            <person name="Moxon E.R."/>
            <person name="Masignani V."/>
        </authorList>
    </citation>
    <scope>NUCLEOTIDE SEQUENCE [LARGE SCALE GENOMIC DNA]</scope>
    <source>
        <strain>Hungary19A-6</strain>
    </source>
</reference>
<sequence>MSNIYDSANELSRGLRGLPEYKAVKAAKDAIAADAEASKIFTEYLAFQEEIQKLAQTGQMPDASFQAKMEGFGKQIQGNSLLSEFFTKQQQLAIYLSDIEKIVFEPVSELLK</sequence>
<gene>
    <name type="ordered locus">SPH_1504</name>
</gene>
<evidence type="ECO:0000255" key="1">
    <source>
        <dbReference type="HAMAP-Rule" id="MF_01526"/>
    </source>
</evidence>